<comment type="function">
    <text evidence="1">Involved in the synthesis of autoinducer 2 (AI-2) which is secreted by bacteria and is used to communicate both the cell density and the metabolic potential of the environment. The regulation of gene expression in response to changes in cell density is called quorum sensing. Catalyzes the transformation of S-ribosylhomocysteine (RHC) to homocysteine (HC) and 4,5-dihydroxy-2,3-pentadione (DPD).</text>
</comment>
<comment type="catalytic activity">
    <reaction evidence="1">
        <text>S-(5-deoxy-D-ribos-5-yl)-L-homocysteine = (S)-4,5-dihydroxypentane-2,3-dione + L-homocysteine</text>
        <dbReference type="Rhea" id="RHEA:17753"/>
        <dbReference type="ChEBI" id="CHEBI:29484"/>
        <dbReference type="ChEBI" id="CHEBI:58195"/>
        <dbReference type="ChEBI" id="CHEBI:58199"/>
        <dbReference type="EC" id="4.4.1.21"/>
    </reaction>
</comment>
<comment type="cofactor">
    <cofactor evidence="1">
        <name>Fe cation</name>
        <dbReference type="ChEBI" id="CHEBI:24875"/>
    </cofactor>
    <text evidence="1">Binds 1 Fe cation per subunit.</text>
</comment>
<comment type="subunit">
    <text evidence="1">Homodimer.</text>
</comment>
<comment type="similarity">
    <text evidence="1">Belongs to the LuxS family.</text>
</comment>
<sequence length="169" mass="18653">MPLLDSFTVDHTRMNAPAVRVAKSMATPKGDTITVFDLRFCVPNKEILSERGIHTLEHLFAGFMRDHLNSDSVEIIDISPMGCRTGFYMSLIGTPSESVVADAWLAAMQDVLNVVAQADIPELNEYQCGTYEMHSLEQAQEIARNIIAAGINVNRNDDLSLSDEILKGL</sequence>
<reference key="1">
    <citation type="submission" date="2007-10" db="EMBL/GenBank/DDBJ databases">
        <title>Complete sequence of Shewanella pealeana ATCC 700345.</title>
        <authorList>
            <consortium name="US DOE Joint Genome Institute"/>
            <person name="Copeland A."/>
            <person name="Lucas S."/>
            <person name="Lapidus A."/>
            <person name="Barry K."/>
            <person name="Glavina del Rio T."/>
            <person name="Dalin E."/>
            <person name="Tice H."/>
            <person name="Pitluck S."/>
            <person name="Chertkov O."/>
            <person name="Brettin T."/>
            <person name="Bruce D."/>
            <person name="Detter J.C."/>
            <person name="Han C."/>
            <person name="Schmutz J."/>
            <person name="Larimer F."/>
            <person name="Land M."/>
            <person name="Hauser L."/>
            <person name="Kyrpides N."/>
            <person name="Kim E."/>
            <person name="Zhao J.-S.Z."/>
            <person name="Manno D."/>
            <person name="Hawari J."/>
            <person name="Richardson P."/>
        </authorList>
    </citation>
    <scope>NUCLEOTIDE SEQUENCE [LARGE SCALE GENOMIC DNA]</scope>
    <source>
        <strain>ATCC 700345 / ANG-SQ1</strain>
    </source>
</reference>
<protein>
    <recommendedName>
        <fullName evidence="1">S-ribosylhomocysteine lyase</fullName>
        <ecNumber evidence="1">4.4.1.21</ecNumber>
    </recommendedName>
    <alternativeName>
        <fullName evidence="1">AI-2 synthesis protein</fullName>
    </alternativeName>
    <alternativeName>
        <fullName evidence="1">Autoinducer-2 production protein LuxS</fullName>
    </alternativeName>
</protein>
<organism>
    <name type="scientific">Shewanella pealeana (strain ATCC 700345 / ANG-SQ1)</name>
    <dbReference type="NCBI Taxonomy" id="398579"/>
    <lineage>
        <taxon>Bacteria</taxon>
        <taxon>Pseudomonadati</taxon>
        <taxon>Pseudomonadota</taxon>
        <taxon>Gammaproteobacteria</taxon>
        <taxon>Alteromonadales</taxon>
        <taxon>Shewanellaceae</taxon>
        <taxon>Shewanella</taxon>
    </lineage>
</organism>
<proteinExistence type="inferred from homology"/>
<gene>
    <name evidence="1" type="primary">luxS</name>
    <name type="ordered locus">Spea_3104</name>
</gene>
<feature type="chain" id="PRO_1000075460" description="S-ribosylhomocysteine lyase">
    <location>
        <begin position="1"/>
        <end position="169"/>
    </location>
</feature>
<feature type="binding site" evidence="1">
    <location>
        <position position="54"/>
    </location>
    <ligand>
        <name>Fe cation</name>
        <dbReference type="ChEBI" id="CHEBI:24875"/>
    </ligand>
</feature>
<feature type="binding site" evidence="1">
    <location>
        <position position="58"/>
    </location>
    <ligand>
        <name>Fe cation</name>
        <dbReference type="ChEBI" id="CHEBI:24875"/>
    </ligand>
</feature>
<feature type="binding site" evidence="1">
    <location>
        <position position="128"/>
    </location>
    <ligand>
        <name>Fe cation</name>
        <dbReference type="ChEBI" id="CHEBI:24875"/>
    </ligand>
</feature>
<keyword id="KW-0071">Autoinducer synthesis</keyword>
<keyword id="KW-0408">Iron</keyword>
<keyword id="KW-0456">Lyase</keyword>
<keyword id="KW-0479">Metal-binding</keyword>
<keyword id="KW-0673">Quorum sensing</keyword>
<keyword id="KW-1185">Reference proteome</keyword>
<name>LUXS_SHEPA</name>
<evidence type="ECO:0000255" key="1">
    <source>
        <dbReference type="HAMAP-Rule" id="MF_00091"/>
    </source>
</evidence>
<dbReference type="EC" id="4.4.1.21" evidence="1"/>
<dbReference type="EMBL" id="CP000851">
    <property type="protein sequence ID" value="ABV88420.1"/>
    <property type="molecule type" value="Genomic_DNA"/>
</dbReference>
<dbReference type="RefSeq" id="WP_012156322.1">
    <property type="nucleotide sequence ID" value="NC_009901.1"/>
</dbReference>
<dbReference type="SMR" id="A8H783"/>
<dbReference type="STRING" id="398579.Spea_3104"/>
<dbReference type="KEGG" id="spl:Spea_3104"/>
<dbReference type="eggNOG" id="COG1854">
    <property type="taxonomic scope" value="Bacteria"/>
</dbReference>
<dbReference type="HOGENOM" id="CLU_107531_2_0_6"/>
<dbReference type="OrthoDB" id="9788129at2"/>
<dbReference type="Proteomes" id="UP000002608">
    <property type="component" value="Chromosome"/>
</dbReference>
<dbReference type="GO" id="GO:0005506">
    <property type="term" value="F:iron ion binding"/>
    <property type="evidence" value="ECO:0007669"/>
    <property type="project" value="InterPro"/>
</dbReference>
<dbReference type="GO" id="GO:0043768">
    <property type="term" value="F:S-ribosylhomocysteine lyase activity"/>
    <property type="evidence" value="ECO:0007669"/>
    <property type="project" value="UniProtKB-UniRule"/>
</dbReference>
<dbReference type="GO" id="GO:0009372">
    <property type="term" value="P:quorum sensing"/>
    <property type="evidence" value="ECO:0007669"/>
    <property type="project" value="UniProtKB-UniRule"/>
</dbReference>
<dbReference type="FunFam" id="3.30.1360.80:FF:000001">
    <property type="entry name" value="S-ribosylhomocysteine lyase"/>
    <property type="match status" value="1"/>
</dbReference>
<dbReference type="Gene3D" id="3.30.1360.80">
    <property type="entry name" value="S-ribosylhomocysteinase (LuxS)"/>
    <property type="match status" value="1"/>
</dbReference>
<dbReference type="HAMAP" id="MF_00091">
    <property type="entry name" value="LuxS"/>
    <property type="match status" value="1"/>
</dbReference>
<dbReference type="InterPro" id="IPR037005">
    <property type="entry name" value="LuxS_sf"/>
</dbReference>
<dbReference type="InterPro" id="IPR011249">
    <property type="entry name" value="Metalloenz_LuxS/M16"/>
</dbReference>
<dbReference type="InterPro" id="IPR003815">
    <property type="entry name" value="S-ribosylhomocysteinase"/>
</dbReference>
<dbReference type="NCBIfam" id="NF002602">
    <property type="entry name" value="PRK02260.1-2"/>
    <property type="match status" value="1"/>
</dbReference>
<dbReference type="PANTHER" id="PTHR35799">
    <property type="entry name" value="S-RIBOSYLHOMOCYSTEINE LYASE"/>
    <property type="match status" value="1"/>
</dbReference>
<dbReference type="PANTHER" id="PTHR35799:SF1">
    <property type="entry name" value="S-RIBOSYLHOMOCYSTEINE LYASE"/>
    <property type="match status" value="1"/>
</dbReference>
<dbReference type="Pfam" id="PF02664">
    <property type="entry name" value="LuxS"/>
    <property type="match status" value="1"/>
</dbReference>
<dbReference type="PIRSF" id="PIRSF006160">
    <property type="entry name" value="AI2"/>
    <property type="match status" value="1"/>
</dbReference>
<dbReference type="PRINTS" id="PR01487">
    <property type="entry name" value="LUXSPROTEIN"/>
</dbReference>
<dbReference type="SUPFAM" id="SSF63411">
    <property type="entry name" value="LuxS/MPP-like metallohydrolase"/>
    <property type="match status" value="1"/>
</dbReference>
<accession>A8H783</accession>